<name>GATA_STAA8</name>
<protein>
    <recommendedName>
        <fullName evidence="1">Glutamyl-tRNA(Gln) amidotransferase subunit A</fullName>
        <shortName evidence="1">Glu-ADT subunit A</shortName>
        <ecNumber evidence="1">6.3.5.7</ecNumber>
    </recommendedName>
</protein>
<keyword id="KW-0067">ATP-binding</keyword>
<keyword id="KW-0436">Ligase</keyword>
<keyword id="KW-0547">Nucleotide-binding</keyword>
<keyword id="KW-0648">Protein biosynthesis</keyword>
<keyword id="KW-1185">Reference proteome</keyword>
<dbReference type="EC" id="6.3.5.7" evidence="1"/>
<dbReference type="EMBL" id="CP000253">
    <property type="protein sequence ID" value="ABD31167.1"/>
    <property type="molecule type" value="Genomic_DNA"/>
</dbReference>
<dbReference type="RefSeq" id="WP_000027928.1">
    <property type="nucleotide sequence ID" value="NZ_LS483365.1"/>
</dbReference>
<dbReference type="RefSeq" id="YP_500609.1">
    <property type="nucleotide sequence ID" value="NC_007795.1"/>
</dbReference>
<dbReference type="SMR" id="Q2FWY9"/>
<dbReference type="STRING" id="93061.SAOUHSC_02117"/>
<dbReference type="PaxDb" id="1280-SAXN108_1999"/>
<dbReference type="GeneID" id="3921189"/>
<dbReference type="KEGG" id="sao:SAOUHSC_02117"/>
<dbReference type="PATRIC" id="fig|93061.5.peg.1921"/>
<dbReference type="eggNOG" id="COG0154">
    <property type="taxonomic scope" value="Bacteria"/>
</dbReference>
<dbReference type="HOGENOM" id="CLU_009600_0_3_9"/>
<dbReference type="OrthoDB" id="9811471at2"/>
<dbReference type="PRO" id="PR:Q2FWY9"/>
<dbReference type="Proteomes" id="UP000008816">
    <property type="component" value="Chromosome"/>
</dbReference>
<dbReference type="GO" id="GO:0030956">
    <property type="term" value="C:glutamyl-tRNA(Gln) amidotransferase complex"/>
    <property type="evidence" value="ECO:0007669"/>
    <property type="project" value="InterPro"/>
</dbReference>
<dbReference type="GO" id="GO:0005524">
    <property type="term" value="F:ATP binding"/>
    <property type="evidence" value="ECO:0007669"/>
    <property type="project" value="UniProtKB-KW"/>
</dbReference>
<dbReference type="GO" id="GO:0050567">
    <property type="term" value="F:glutaminyl-tRNA synthase (glutamine-hydrolyzing) activity"/>
    <property type="evidence" value="ECO:0007669"/>
    <property type="project" value="UniProtKB-UniRule"/>
</dbReference>
<dbReference type="GO" id="GO:0006412">
    <property type="term" value="P:translation"/>
    <property type="evidence" value="ECO:0007669"/>
    <property type="project" value="UniProtKB-UniRule"/>
</dbReference>
<dbReference type="Gene3D" id="3.90.1300.10">
    <property type="entry name" value="Amidase signature (AS) domain"/>
    <property type="match status" value="1"/>
</dbReference>
<dbReference type="HAMAP" id="MF_00120">
    <property type="entry name" value="GatA"/>
    <property type="match status" value="1"/>
</dbReference>
<dbReference type="InterPro" id="IPR000120">
    <property type="entry name" value="Amidase"/>
</dbReference>
<dbReference type="InterPro" id="IPR020556">
    <property type="entry name" value="Amidase_CS"/>
</dbReference>
<dbReference type="InterPro" id="IPR023631">
    <property type="entry name" value="Amidase_dom"/>
</dbReference>
<dbReference type="InterPro" id="IPR036928">
    <property type="entry name" value="AS_sf"/>
</dbReference>
<dbReference type="InterPro" id="IPR004412">
    <property type="entry name" value="GatA"/>
</dbReference>
<dbReference type="NCBIfam" id="TIGR00132">
    <property type="entry name" value="gatA"/>
    <property type="match status" value="1"/>
</dbReference>
<dbReference type="PANTHER" id="PTHR11895:SF151">
    <property type="entry name" value="GLUTAMYL-TRNA(GLN) AMIDOTRANSFERASE SUBUNIT A"/>
    <property type="match status" value="1"/>
</dbReference>
<dbReference type="PANTHER" id="PTHR11895">
    <property type="entry name" value="TRANSAMIDASE"/>
    <property type="match status" value="1"/>
</dbReference>
<dbReference type="Pfam" id="PF01425">
    <property type="entry name" value="Amidase"/>
    <property type="match status" value="1"/>
</dbReference>
<dbReference type="SUPFAM" id="SSF75304">
    <property type="entry name" value="Amidase signature (AS) enzymes"/>
    <property type="match status" value="1"/>
</dbReference>
<dbReference type="PROSITE" id="PS00571">
    <property type="entry name" value="AMIDASES"/>
    <property type="match status" value="1"/>
</dbReference>
<sequence>MSIRYESVENLLTLIKDKKIKPSDVVKDIYDAIEETDPTIKSFLALDKENAIKKAQELDELQAKDQMDGKLFGIPMGIKDNIITNGLETTCASKMLEGFVPIYESTVMEKLHNENAVLIGKLNMDEFAMGGSTETSYFKKTVNPFDHKAVPGGSSGGSAAAVAAGLVPFSLGSDTGGSIRQPAAYCGVVGMKPTYGRVSRFGLVAFASSLDQIGPLTRNVKDNAIVLEAISGADVNDSTSAPVDDVDFTSEIGKDIKGLKVALPKEYLGEGVADDVKEAVQNAVETLKSLGAVVEEVSLPNTKFGIPSYYVIASSEASSNLSRFDGIRYGYHSKEAHSLEELYKMSRSEGFGKEVKRRIFLGTFALSSGYYDAYYKKSQKVRTLIKNDFDKVFENYDVVVGPTAPTTAFNLGEEIDDPLTMYANDLLTTPVNLAGLPGISVPCGQSNGRPIGLQFIGKPFDEKTLYRVAYQYETQYNLHDVYEKL</sequence>
<accession>Q2FWY9</accession>
<evidence type="ECO:0000255" key="1">
    <source>
        <dbReference type="HAMAP-Rule" id="MF_00120"/>
    </source>
</evidence>
<comment type="function">
    <text evidence="1">Allows the formation of correctly charged Gln-tRNA(Gln) through the transamidation of misacylated Glu-tRNA(Gln) in organisms which lack glutaminyl-tRNA synthetase. The reaction takes place in the presence of glutamine and ATP through an activated gamma-phospho-Glu-tRNA(Gln).</text>
</comment>
<comment type="catalytic activity">
    <reaction evidence="1">
        <text>L-glutamyl-tRNA(Gln) + L-glutamine + ATP + H2O = L-glutaminyl-tRNA(Gln) + L-glutamate + ADP + phosphate + H(+)</text>
        <dbReference type="Rhea" id="RHEA:17521"/>
        <dbReference type="Rhea" id="RHEA-COMP:9681"/>
        <dbReference type="Rhea" id="RHEA-COMP:9684"/>
        <dbReference type="ChEBI" id="CHEBI:15377"/>
        <dbReference type="ChEBI" id="CHEBI:15378"/>
        <dbReference type="ChEBI" id="CHEBI:29985"/>
        <dbReference type="ChEBI" id="CHEBI:30616"/>
        <dbReference type="ChEBI" id="CHEBI:43474"/>
        <dbReference type="ChEBI" id="CHEBI:58359"/>
        <dbReference type="ChEBI" id="CHEBI:78520"/>
        <dbReference type="ChEBI" id="CHEBI:78521"/>
        <dbReference type="ChEBI" id="CHEBI:456216"/>
        <dbReference type="EC" id="6.3.5.7"/>
    </reaction>
</comment>
<comment type="subunit">
    <text evidence="1">Heterotrimer of A, B and C subunits.</text>
</comment>
<comment type="similarity">
    <text evidence="1">Belongs to the amidase family. GatA subfamily.</text>
</comment>
<organism>
    <name type="scientific">Staphylococcus aureus (strain NCTC 8325 / PS 47)</name>
    <dbReference type="NCBI Taxonomy" id="93061"/>
    <lineage>
        <taxon>Bacteria</taxon>
        <taxon>Bacillati</taxon>
        <taxon>Bacillota</taxon>
        <taxon>Bacilli</taxon>
        <taxon>Bacillales</taxon>
        <taxon>Staphylococcaceae</taxon>
        <taxon>Staphylococcus</taxon>
    </lineage>
</organism>
<proteinExistence type="inferred from homology"/>
<feature type="chain" id="PRO_1000015909" description="Glutamyl-tRNA(Gln) amidotransferase subunit A">
    <location>
        <begin position="1"/>
        <end position="485"/>
    </location>
</feature>
<feature type="active site" description="Charge relay system" evidence="1">
    <location>
        <position position="79"/>
    </location>
</feature>
<feature type="active site" description="Charge relay system" evidence="1">
    <location>
        <position position="154"/>
    </location>
</feature>
<feature type="active site" description="Acyl-ester intermediate" evidence="1">
    <location>
        <position position="178"/>
    </location>
</feature>
<reference key="1">
    <citation type="book" date="2006" name="Gram positive pathogens, 2nd edition">
        <title>The Staphylococcus aureus NCTC 8325 genome.</title>
        <editorList>
            <person name="Fischetti V."/>
            <person name="Novick R."/>
            <person name="Ferretti J."/>
            <person name="Portnoy D."/>
            <person name="Rood J."/>
        </editorList>
        <authorList>
            <person name="Gillaspy A.F."/>
            <person name="Worrell V."/>
            <person name="Orvis J."/>
            <person name="Roe B.A."/>
            <person name="Dyer D.W."/>
            <person name="Iandolo J.J."/>
        </authorList>
    </citation>
    <scope>NUCLEOTIDE SEQUENCE [LARGE SCALE GENOMIC DNA]</scope>
    <source>
        <strain>NCTC 8325 / PS 47</strain>
    </source>
</reference>
<gene>
    <name evidence="1" type="primary">gatA</name>
    <name type="ordered locus">SAOUHSC_02117</name>
</gene>